<keyword id="KW-0150">Chloroplast</keyword>
<keyword id="KW-0472">Membrane</keyword>
<keyword id="KW-0611">Plant defense</keyword>
<keyword id="KW-0934">Plastid</keyword>
<keyword id="KW-1185">Reference proteome</keyword>
<keyword id="KW-0809">Transit peptide</keyword>
<keyword id="KW-0812">Transmembrane</keyword>
<keyword id="KW-1133">Transmembrane helix</keyword>
<feature type="transit peptide" description="Chloroplast" evidence="2">
    <location>
        <begin position="1"/>
        <end position="43"/>
    </location>
</feature>
<feature type="chain" id="PRO_0000445600" description="Protein RESISTANCE TO PHYTOPHTHORA 1, chloroplastic" evidence="2">
    <location>
        <begin position="44"/>
        <end position="235"/>
    </location>
</feature>
<feature type="transmembrane region" description="Helical" evidence="2">
    <location>
        <begin position="131"/>
        <end position="151"/>
    </location>
</feature>
<feature type="transmembrane region" description="Helical" evidence="2">
    <location>
        <begin position="158"/>
        <end position="178"/>
    </location>
</feature>
<feature type="transmembrane region" description="Helical" evidence="2">
    <location>
        <begin position="188"/>
        <end position="208"/>
    </location>
</feature>
<feature type="transmembrane region" description="Helical" evidence="2">
    <location>
        <begin position="211"/>
        <end position="231"/>
    </location>
</feature>
<feature type="region of interest" description="Disordered" evidence="3">
    <location>
        <begin position="53"/>
        <end position="92"/>
    </location>
</feature>
<feature type="compositionally biased region" description="Basic and acidic residues" evidence="3">
    <location>
        <begin position="53"/>
        <end position="66"/>
    </location>
</feature>
<feature type="sequence conflict" description="In Ref. 2; BM112240." evidence="6" ref="2">
    <original>F</original>
    <variation>S</variation>
    <location>
        <position position="20"/>
    </location>
</feature>
<feature type="sequence conflict" description="In Ref. 2; BM112240." evidence="6" ref="2">
    <original>I</original>
    <variation>S</variation>
    <location>
        <position position="37"/>
    </location>
</feature>
<feature type="sequence conflict" description="In Ref. 2; BM112240." evidence="6" ref="2">
    <original>T</original>
    <variation>I</variation>
    <location>
        <position position="61"/>
    </location>
</feature>
<feature type="sequence conflict" description="In Ref. 2; BM112240." evidence="6" ref="2">
    <original>E</original>
    <variation>G</variation>
    <location>
        <position position="82"/>
    </location>
</feature>
<feature type="sequence conflict" description="In Ref. 2; BM112240." evidence="6" ref="2">
    <original>LQK</original>
    <variation>ATE</variation>
    <location>
        <begin position="231"/>
        <end position="233"/>
    </location>
</feature>
<evidence type="ECO:0000250" key="1">
    <source>
        <dbReference type="UniProtKB" id="Q9ZU82"/>
    </source>
</evidence>
<evidence type="ECO:0000255" key="2"/>
<evidence type="ECO:0000256" key="3">
    <source>
        <dbReference type="SAM" id="MobiDB-lite"/>
    </source>
</evidence>
<evidence type="ECO:0000269" key="4">
    <source>
    </source>
</evidence>
<evidence type="ECO:0000303" key="5">
    <source>
    </source>
</evidence>
<evidence type="ECO:0000305" key="6"/>
<dbReference type="EMBL" id="BM112240">
    <property type="status" value="NOT_ANNOTATED_CDS"/>
    <property type="molecule type" value="mRNA"/>
</dbReference>
<dbReference type="FunCoup" id="M1C5M7">
    <property type="interactions" value="1633"/>
</dbReference>
<dbReference type="STRING" id="4113.M1C5M7"/>
<dbReference type="PaxDb" id="4113-PGSC0003DMT400060330"/>
<dbReference type="EnsemblPlants" id="PGSC0003DMT400060330">
    <property type="protein sequence ID" value="PGSC0003DMT400060330"/>
    <property type="gene ID" value="PGSC0003DMG400023469"/>
</dbReference>
<dbReference type="GeneID" id="102592434"/>
<dbReference type="Gramene" id="PGSC0003DMT400060330">
    <property type="protein sequence ID" value="PGSC0003DMT400060330"/>
    <property type="gene ID" value="PGSC0003DMG400023469"/>
</dbReference>
<dbReference type="KEGG" id="sot:102592434"/>
<dbReference type="eggNOG" id="ENOG502QSK6">
    <property type="taxonomic scope" value="Eukaryota"/>
</dbReference>
<dbReference type="HOGENOM" id="CLU_082560_1_0_1"/>
<dbReference type="InParanoid" id="M1C5M7"/>
<dbReference type="OMA" id="MNLATTM"/>
<dbReference type="OrthoDB" id="424372at2759"/>
<dbReference type="Proteomes" id="UP000011115">
    <property type="component" value="Unassembled WGS sequence"/>
</dbReference>
<dbReference type="GO" id="GO:0009507">
    <property type="term" value="C:chloroplast"/>
    <property type="evidence" value="ECO:0000250"/>
    <property type="project" value="UniProtKB"/>
</dbReference>
<dbReference type="GO" id="GO:0016020">
    <property type="term" value="C:membrane"/>
    <property type="evidence" value="ECO:0007669"/>
    <property type="project" value="UniProtKB-SubCell"/>
</dbReference>
<dbReference type="GO" id="GO:0006952">
    <property type="term" value="P:defense response"/>
    <property type="evidence" value="ECO:0007669"/>
    <property type="project" value="UniProtKB-KW"/>
</dbReference>
<dbReference type="GO" id="GO:0050665">
    <property type="term" value="P:hydrogen peroxide biosynthetic process"/>
    <property type="evidence" value="ECO:0000250"/>
    <property type="project" value="UniProtKB"/>
</dbReference>
<dbReference type="GO" id="GO:1902290">
    <property type="term" value="P:positive regulation of defense response to oomycetes"/>
    <property type="evidence" value="ECO:0000315"/>
    <property type="project" value="UniProtKB"/>
</dbReference>
<dbReference type="InterPro" id="IPR044966">
    <property type="entry name" value="RPH1"/>
</dbReference>
<dbReference type="PANTHER" id="PTHR36359">
    <property type="entry name" value="PROTEIN RESISTANCE TO PHYTOPHTHORA 1, CHLOROPLASTIC"/>
    <property type="match status" value="1"/>
</dbReference>
<dbReference type="PANTHER" id="PTHR36359:SF1">
    <property type="entry name" value="PROTEIN RESISTANCE TO PHYTOPHTHORA 1, CHLOROPLASTIC"/>
    <property type="match status" value="1"/>
</dbReference>
<accession>M1C5M7</accession>
<name>RPH1_SOLTU</name>
<reference key="1">
    <citation type="journal article" date="2011" name="Nature">
        <title>Genome sequence and analysis of the tuber crop potato.</title>
        <authorList>
            <consortium name="The Potato Genome Sequencing Consortium"/>
        </authorList>
    </citation>
    <scope>NUCLEOTIDE SEQUENCE [LARGE SCALE GENOMIC DNA]</scope>
    <source>
        <strain>cv. DM1-3 516 R44</strain>
    </source>
</reference>
<reference key="2">
    <citation type="submission" date="2003-11" db="EMBL/GenBank/DDBJ databases">
        <title>Generation of ESTs from potato roots.</title>
        <authorList>
            <person name="van der Hoeven R."/>
            <person name="Sun H."/>
            <person name="Karamycheva S.A."/>
            <person name="Tsai J."/>
            <person name="Van Aken S."/>
            <person name="Utterback T."/>
            <person name="Chiemingo A."/>
            <person name="Bougri O."/>
            <person name="Buell C.R."/>
            <person name="Ronning C."/>
            <person name="Tanksley S."/>
            <person name="Baker B."/>
        </authorList>
    </citation>
    <scope>NUCLEOTIDE SEQUENCE [LARGE SCALE MRNA]</scope>
    <source>
        <strain>cv. Kennebec</strain>
    </source>
</reference>
<reference key="3">
    <citation type="journal article" date="2009" name="Plant J.">
        <title>The chloroplast protein RPH1 plays a role in the immune response of Arabidopsis to Phytophthora brassicae.</title>
        <authorList>
            <person name="Belhaj K."/>
            <person name="Lin B."/>
            <person name="Mauch F."/>
        </authorList>
    </citation>
    <scope>FUNCTION</scope>
    <scope>DISRUPTION PHENOTYPE</scope>
    <source>
        <strain>cv. Matilda</strain>
    </source>
</reference>
<sequence length="235" mass="26243">MNSATTMSASVLNYQILKFFPPQKNGFLKSPLIRGKICRFCVSASSNELNKQVIEDPKEETQEKSDGVIVNSTEEEEERSGENSTSTGPSTVLDNKELKKAVLKTASTFAPRASTATKNPAKPGTVLYTVFEVQAYASMLIGGALSFNLIFPSTEPDIWRLMGMWSIWMFTIPSLRARDCSKDEKEALNYLFLLVPLLNVAIPFFLKSFAVVWSADTVAFLGMYAWKLGWLQKER</sequence>
<gene>
    <name evidence="5" type="primary">RPH1</name>
</gene>
<comment type="function">
    <text evidence="4">Plays a positive role in the immune response to the oomycetes P.infestans, including induced oxidative burst and enhanced expression of defense-related genes.</text>
</comment>
<comment type="subcellular location">
    <subcellularLocation>
        <location evidence="1">Plastid</location>
        <location evidence="1">Chloroplast</location>
    </subcellularLocation>
    <subcellularLocation>
        <location evidence="2">Membrane</location>
        <topology evidence="2">Multi-pass membrane protein</topology>
    </subcellularLocation>
</comment>
<comment type="disruption phenotype">
    <text evidence="4">Susceptiblility to the late blight oomycete pathogen P.infestans.</text>
</comment>
<organism>
    <name type="scientific">Solanum tuberosum</name>
    <name type="common">Potato</name>
    <dbReference type="NCBI Taxonomy" id="4113"/>
    <lineage>
        <taxon>Eukaryota</taxon>
        <taxon>Viridiplantae</taxon>
        <taxon>Streptophyta</taxon>
        <taxon>Embryophyta</taxon>
        <taxon>Tracheophyta</taxon>
        <taxon>Spermatophyta</taxon>
        <taxon>Magnoliopsida</taxon>
        <taxon>eudicotyledons</taxon>
        <taxon>Gunneridae</taxon>
        <taxon>Pentapetalae</taxon>
        <taxon>asterids</taxon>
        <taxon>lamiids</taxon>
        <taxon>Solanales</taxon>
        <taxon>Solanaceae</taxon>
        <taxon>Solanoideae</taxon>
        <taxon>Solaneae</taxon>
        <taxon>Solanum</taxon>
    </lineage>
</organism>
<proteinExistence type="evidence at transcript level"/>
<protein>
    <recommendedName>
        <fullName evidence="5">Protein RESISTANCE TO PHYTOPHTHORA 1, chloroplastic</fullName>
        <shortName evidence="5">StRPH1</shortName>
    </recommendedName>
</protein>